<proteinExistence type="evidence at protein level"/>
<name>U6A_CONPI</name>
<organism>
    <name type="scientific">Conus parius</name>
    <name type="common">Cone snail</name>
    <dbReference type="NCBI Taxonomy" id="505247"/>
    <lineage>
        <taxon>Eukaryota</taxon>
        <taxon>Metazoa</taxon>
        <taxon>Spiralia</taxon>
        <taxon>Lophotrochozoa</taxon>
        <taxon>Mollusca</taxon>
        <taxon>Gastropoda</taxon>
        <taxon>Caenogastropoda</taxon>
        <taxon>Neogastropoda</taxon>
        <taxon>Conoidea</taxon>
        <taxon>Conidae</taxon>
        <taxon>Conus</taxon>
        <taxon>Phasmoconus</taxon>
    </lineage>
</organism>
<evidence type="ECO:0000250" key="1"/>
<evidence type="ECO:0000269" key="2">
    <source>
    </source>
</evidence>
<evidence type="ECO:0000303" key="3">
    <source>
    </source>
</evidence>
<evidence type="ECO:0000305" key="4"/>
<evidence type="ECO:0000305" key="5">
    <source>
    </source>
</evidence>
<accession>P0CH17</accession>
<dbReference type="SMR" id="P0CH17"/>
<dbReference type="GO" id="GO:0005576">
    <property type="term" value="C:extracellular region"/>
    <property type="evidence" value="ECO:0007669"/>
    <property type="project" value="UniProtKB-SubCell"/>
</dbReference>
<dbReference type="GO" id="GO:0090729">
    <property type="term" value="F:toxin activity"/>
    <property type="evidence" value="ECO:0007669"/>
    <property type="project" value="UniProtKB-KW"/>
</dbReference>
<dbReference type="SUPFAM" id="SSF57059">
    <property type="entry name" value="omega toxin-like"/>
    <property type="match status" value="1"/>
</dbReference>
<reference key="1">
    <citation type="journal article" date="2010" name="Peptides">
        <title>Divergent M- and O-superfamily peptides from venom of fish-hunting Conus parius.</title>
        <authorList>
            <person name="Jimenez E.C."/>
            <person name="Olivera B.M."/>
        </authorList>
    </citation>
    <scope>PROTEIN SEQUENCE</scope>
    <scope>FUNCTION</scope>
    <scope>MASS SPECTROMETRY</scope>
    <scope>SUBCELLULAR LOCATION</scope>
    <source>
        <tissue>Venom</tissue>
    </source>
</reference>
<sequence>TCLARDELCGASFLSNFLCCDGLCLLICV</sequence>
<keyword id="KW-0903">Direct protein sequencing</keyword>
<keyword id="KW-1015">Disulfide bond</keyword>
<keyword id="KW-0960">Knottin</keyword>
<keyword id="KW-0528">Neurotoxin</keyword>
<keyword id="KW-0964">Secreted</keyword>
<keyword id="KW-0800">Toxin</keyword>
<protein>
    <recommendedName>
        <fullName evidence="3">Conotoxin pr6a</fullName>
    </recommendedName>
</protein>
<comment type="function">
    <text evidence="2">Intraperitoneal injection into fish (1 nmol) provokes hyperactivity and erratic swimming in various directions after 14 minutes.</text>
</comment>
<comment type="subcellular location">
    <subcellularLocation>
        <location evidence="2">Secreted</location>
    </subcellularLocation>
</comment>
<comment type="tissue specificity">
    <text evidence="5">Expressed by the venom duct.</text>
</comment>
<comment type="domain">
    <text evidence="1">The presence of a 'disulfide through disulfide knot' structurally defines this protein as a knottin.</text>
</comment>
<comment type="domain">
    <text evidence="4">The cysteine framework is VI/VII (C-C-CC-C-C).</text>
</comment>
<comment type="mass spectrometry">
    <text>Monoisotopic mass.</text>
</comment>
<feature type="peptide" id="PRO_0000397115" description="Conotoxin pr6a" evidence="2">
    <location>
        <begin position="1"/>
        <end position="29"/>
    </location>
</feature>
<feature type="disulfide bond" evidence="1">
    <location>
        <begin position="2"/>
        <end position="20"/>
    </location>
</feature>
<feature type="disulfide bond" evidence="1">
    <location>
        <begin position="9"/>
        <end position="24"/>
    </location>
</feature>
<feature type="disulfide bond" evidence="1">
    <location>
        <begin position="19"/>
        <end position="28"/>
    </location>
</feature>